<gene>
    <name evidence="1" type="primary">yceH</name>
    <name type="ordered locus">STY1206</name>
    <name type="ordered locus">t1752</name>
</gene>
<name>YCEH_SALTI</name>
<reference key="1">
    <citation type="journal article" date="2001" name="Nature">
        <title>Complete genome sequence of a multiple drug resistant Salmonella enterica serovar Typhi CT18.</title>
        <authorList>
            <person name="Parkhill J."/>
            <person name="Dougan G."/>
            <person name="James K.D."/>
            <person name="Thomson N.R."/>
            <person name="Pickard D."/>
            <person name="Wain J."/>
            <person name="Churcher C.M."/>
            <person name="Mungall K.L."/>
            <person name="Bentley S.D."/>
            <person name="Holden M.T.G."/>
            <person name="Sebaihia M."/>
            <person name="Baker S."/>
            <person name="Basham D."/>
            <person name="Brooks K."/>
            <person name="Chillingworth T."/>
            <person name="Connerton P."/>
            <person name="Cronin A."/>
            <person name="Davis P."/>
            <person name="Davies R.M."/>
            <person name="Dowd L."/>
            <person name="White N."/>
            <person name="Farrar J."/>
            <person name="Feltwell T."/>
            <person name="Hamlin N."/>
            <person name="Haque A."/>
            <person name="Hien T.T."/>
            <person name="Holroyd S."/>
            <person name="Jagels K."/>
            <person name="Krogh A."/>
            <person name="Larsen T.S."/>
            <person name="Leather S."/>
            <person name="Moule S."/>
            <person name="O'Gaora P."/>
            <person name="Parry C."/>
            <person name="Quail M.A."/>
            <person name="Rutherford K.M."/>
            <person name="Simmonds M."/>
            <person name="Skelton J."/>
            <person name="Stevens K."/>
            <person name="Whitehead S."/>
            <person name="Barrell B.G."/>
        </authorList>
    </citation>
    <scope>NUCLEOTIDE SEQUENCE [LARGE SCALE GENOMIC DNA]</scope>
    <source>
        <strain>CT18</strain>
    </source>
</reference>
<reference key="2">
    <citation type="journal article" date="2003" name="J. Bacteriol.">
        <title>Comparative genomics of Salmonella enterica serovar Typhi strains Ty2 and CT18.</title>
        <authorList>
            <person name="Deng W."/>
            <person name="Liou S.-R."/>
            <person name="Plunkett G. III"/>
            <person name="Mayhew G.F."/>
            <person name="Rose D.J."/>
            <person name="Burland V."/>
            <person name="Kodoyianni V."/>
            <person name="Schwartz D.C."/>
            <person name="Blattner F.R."/>
        </authorList>
    </citation>
    <scope>NUCLEOTIDE SEQUENCE [LARGE SCALE GENOMIC DNA]</scope>
    <source>
        <strain>ATCC 700931 / Ty2</strain>
    </source>
</reference>
<protein>
    <recommendedName>
        <fullName evidence="1">UPF0502 protein YceH</fullName>
    </recommendedName>
</protein>
<organism>
    <name type="scientific">Salmonella typhi</name>
    <dbReference type="NCBI Taxonomy" id="90370"/>
    <lineage>
        <taxon>Bacteria</taxon>
        <taxon>Pseudomonadati</taxon>
        <taxon>Pseudomonadota</taxon>
        <taxon>Gammaproteobacteria</taxon>
        <taxon>Enterobacterales</taxon>
        <taxon>Enterobacteriaceae</taxon>
        <taxon>Salmonella</taxon>
    </lineage>
</organism>
<accession>Q8XF09</accession>
<accession>Q7AN49</accession>
<proteinExistence type="inferred from homology"/>
<dbReference type="EMBL" id="AL513382">
    <property type="protein sequence ID" value="CAD08292.1"/>
    <property type="molecule type" value="Genomic_DNA"/>
</dbReference>
<dbReference type="EMBL" id="AE014613">
    <property type="protein sequence ID" value="AAO69376.1"/>
    <property type="molecule type" value="Genomic_DNA"/>
</dbReference>
<dbReference type="RefSeq" id="NP_455661.1">
    <property type="nucleotide sequence ID" value="NC_003198.1"/>
</dbReference>
<dbReference type="RefSeq" id="WP_000873047.1">
    <property type="nucleotide sequence ID" value="NZ_WSUR01000018.1"/>
</dbReference>
<dbReference type="SMR" id="Q8XF09"/>
<dbReference type="STRING" id="220341.gene:17585172"/>
<dbReference type="KEGG" id="stt:t1752"/>
<dbReference type="KEGG" id="sty:STY1206"/>
<dbReference type="PATRIC" id="fig|220341.7.peg.1208"/>
<dbReference type="eggNOG" id="COG3132">
    <property type="taxonomic scope" value="Bacteria"/>
</dbReference>
<dbReference type="HOGENOM" id="CLU_057831_2_0_6"/>
<dbReference type="OMA" id="CNQKSSR"/>
<dbReference type="OrthoDB" id="9784785at2"/>
<dbReference type="Proteomes" id="UP000000541">
    <property type="component" value="Chromosome"/>
</dbReference>
<dbReference type="Proteomes" id="UP000002670">
    <property type="component" value="Chromosome"/>
</dbReference>
<dbReference type="FunFam" id="1.10.10.10:FF:000196">
    <property type="entry name" value="UPF0502 protein YceH"/>
    <property type="match status" value="1"/>
</dbReference>
<dbReference type="Gene3D" id="1.10.10.10">
    <property type="entry name" value="Winged helix-like DNA-binding domain superfamily/Winged helix DNA-binding domain"/>
    <property type="match status" value="2"/>
</dbReference>
<dbReference type="HAMAP" id="MF_01584">
    <property type="entry name" value="UPF0502"/>
    <property type="match status" value="1"/>
</dbReference>
<dbReference type="InterPro" id="IPR007432">
    <property type="entry name" value="DUF480"/>
</dbReference>
<dbReference type="InterPro" id="IPR036388">
    <property type="entry name" value="WH-like_DNA-bd_sf"/>
</dbReference>
<dbReference type="InterPro" id="IPR036390">
    <property type="entry name" value="WH_DNA-bd_sf"/>
</dbReference>
<dbReference type="NCBIfam" id="NF008413">
    <property type="entry name" value="PRK11239.1"/>
    <property type="match status" value="1"/>
</dbReference>
<dbReference type="PANTHER" id="PTHR38768">
    <property type="entry name" value="UPF0502 PROTEIN YCEH"/>
    <property type="match status" value="1"/>
</dbReference>
<dbReference type="PANTHER" id="PTHR38768:SF1">
    <property type="entry name" value="UPF0502 PROTEIN YCEH"/>
    <property type="match status" value="1"/>
</dbReference>
<dbReference type="Pfam" id="PF04337">
    <property type="entry name" value="DUF480"/>
    <property type="match status" value="1"/>
</dbReference>
<dbReference type="SUPFAM" id="SSF46785">
    <property type="entry name" value="Winged helix' DNA-binding domain"/>
    <property type="match status" value="2"/>
</dbReference>
<feature type="chain" id="PRO_0000309421" description="UPF0502 protein YceH">
    <location>
        <begin position="1"/>
        <end position="215"/>
    </location>
</feature>
<comment type="similarity">
    <text evidence="1">Belongs to the UPF0502 family.</text>
</comment>
<evidence type="ECO:0000255" key="1">
    <source>
        <dbReference type="HAMAP-Rule" id="MF_01584"/>
    </source>
</evidence>
<sequence>MKYELTATEARVIGCLLEKQVTTPEQYPLSVNGVVTACNQKTNREPVMNLTEQEVQEQLDNLVKRHFLRTVSGFGNRVTKYEQRFCNSEFGDLKLSAAEVALVTTLLLRGAQTPGELRSRASRMHEFSDMAEVESTLERLASREDGPYVVRLAREPGKRESRYMHLFCGDVDELSLQTSAPESASGDLQSRVEALESEVAELKQRLDSLLAHLGE</sequence>